<dbReference type="EMBL" id="KJ412301">
    <property type="protein sequence ID" value="AHX39344.1"/>
    <property type="molecule type" value="Genomic_DNA"/>
</dbReference>
<dbReference type="PIR" id="S69459">
    <property type="entry name" value="S69459"/>
</dbReference>
<dbReference type="STRING" id="4932.YPR197C"/>
<dbReference type="PaxDb" id="4932-YPR197C"/>
<dbReference type="EnsemblFungi" id="YPR197C_mRNA">
    <property type="protein sequence ID" value="YPR197C"/>
    <property type="gene ID" value="YPR197C"/>
</dbReference>
<dbReference type="AGR" id="SGD:S000006401"/>
<dbReference type="SGD" id="S000006401">
    <property type="gene designation" value="YPR197C"/>
</dbReference>
<dbReference type="HOGENOM" id="CLU_1448792_0_0_1"/>
<gene>
    <name evidence="3" type="ordered locus">YPR197C</name>
</gene>
<name>YP97C_YEAST</name>
<reference key="1">
    <citation type="journal article" date="1997" name="Nature">
        <title>The nucleotide sequence of Saccharomyces cerevisiae chromosome XVI.</title>
        <authorList>
            <person name="Bussey H."/>
            <person name="Storms R.K."/>
            <person name="Ahmed A."/>
            <person name="Albermann K."/>
            <person name="Allen E."/>
            <person name="Ansorge W."/>
            <person name="Araujo R."/>
            <person name="Aparicio A."/>
            <person name="Barrell B.G."/>
            <person name="Badcock K."/>
            <person name="Benes V."/>
            <person name="Botstein D."/>
            <person name="Bowman S."/>
            <person name="Brueckner M."/>
            <person name="Carpenter J."/>
            <person name="Cherry J.M."/>
            <person name="Chung E."/>
            <person name="Churcher C.M."/>
            <person name="Coster F."/>
            <person name="Davis K."/>
            <person name="Davis R.W."/>
            <person name="Dietrich F.S."/>
            <person name="Delius H."/>
            <person name="DiPaolo T."/>
            <person name="Dubois E."/>
            <person name="Duesterhoeft A."/>
            <person name="Duncan M."/>
            <person name="Floeth M."/>
            <person name="Fortin N."/>
            <person name="Friesen J.D."/>
            <person name="Fritz C."/>
            <person name="Goffeau A."/>
            <person name="Hall J."/>
            <person name="Hebling U."/>
            <person name="Heumann K."/>
            <person name="Hilbert H."/>
            <person name="Hillier L.W."/>
            <person name="Hunicke-Smith S."/>
            <person name="Hyman R.W."/>
            <person name="Johnston M."/>
            <person name="Kalman S."/>
            <person name="Kleine K."/>
            <person name="Komp C."/>
            <person name="Kurdi O."/>
            <person name="Lashkari D."/>
            <person name="Lew H."/>
            <person name="Lin A."/>
            <person name="Lin D."/>
            <person name="Louis E.J."/>
            <person name="Marathe R."/>
            <person name="Messenguy F."/>
            <person name="Mewes H.-W."/>
            <person name="Mirtipati S."/>
            <person name="Moestl D."/>
            <person name="Mueller-Auer S."/>
            <person name="Namath A."/>
            <person name="Nentwich U."/>
            <person name="Oefner P."/>
            <person name="Pearson D."/>
            <person name="Petel F.X."/>
            <person name="Pohl T.M."/>
            <person name="Purnelle B."/>
            <person name="Rajandream M.A."/>
            <person name="Rechmann S."/>
            <person name="Rieger M."/>
            <person name="Riles L."/>
            <person name="Roberts D."/>
            <person name="Schaefer M."/>
            <person name="Scharfe M."/>
            <person name="Scherens B."/>
            <person name="Schramm S."/>
            <person name="Schroeder M."/>
            <person name="Sdicu A.-M."/>
            <person name="Tettelin H."/>
            <person name="Urrestarazu L.A."/>
            <person name="Ushinsky S."/>
            <person name="Vierendeels F."/>
            <person name="Vissers S."/>
            <person name="Voss H."/>
            <person name="Walsh S.V."/>
            <person name="Wambutt R."/>
            <person name="Wang Y."/>
            <person name="Wedler E."/>
            <person name="Wedler H."/>
            <person name="Winnett E."/>
            <person name="Zhong W.-W."/>
            <person name="Zollner A."/>
            <person name="Vo D.H."/>
            <person name="Hani J."/>
        </authorList>
    </citation>
    <scope>NUCLEOTIDE SEQUENCE [LARGE SCALE GENOMIC DNA]</scope>
    <source>
        <strain>ATCC 204508 / S288c</strain>
    </source>
</reference>
<reference key="2">
    <citation type="journal article" date="2014" name="G3 (Bethesda)">
        <title>The reference genome sequence of Saccharomyces cerevisiae: Then and now.</title>
        <authorList>
            <person name="Engel S.R."/>
            <person name="Dietrich F.S."/>
            <person name="Fisk D.G."/>
            <person name="Binkley G."/>
            <person name="Balakrishnan R."/>
            <person name="Costanzo M.C."/>
            <person name="Dwight S.S."/>
            <person name="Hitz B.C."/>
            <person name="Karra K."/>
            <person name="Nash R.S."/>
            <person name="Weng S."/>
            <person name="Wong E.D."/>
            <person name="Lloyd P."/>
            <person name="Skrzypek M.S."/>
            <person name="Miyasato S.R."/>
            <person name="Simison M."/>
            <person name="Cherry J.M."/>
        </authorList>
    </citation>
    <scope>GENOME REANNOTATION</scope>
    <source>
        <strain>ATCC 204508 / S288c</strain>
    </source>
</reference>
<organism>
    <name type="scientific">Saccharomyces cerevisiae (strain ATCC 204508 / S288c)</name>
    <name type="common">Baker's yeast</name>
    <dbReference type="NCBI Taxonomy" id="559292"/>
    <lineage>
        <taxon>Eukaryota</taxon>
        <taxon>Fungi</taxon>
        <taxon>Dikarya</taxon>
        <taxon>Ascomycota</taxon>
        <taxon>Saccharomycotina</taxon>
        <taxon>Saccharomycetes</taxon>
        <taxon>Saccharomycetales</taxon>
        <taxon>Saccharomycetaceae</taxon>
        <taxon>Saccharomyces</taxon>
    </lineage>
</organism>
<sequence>MTYDIASAVIIIPLWFSRTMDVPTTKASDSIPLPPNPATTLPLIRVAIEFERAEIKDPISNTITEIIKHSFVPSISAKRPHNNMKTALERAYPVTNQPILPKSWNLMPIVSYKVTTITISKAARKRVNRSDITHKVKLKVLFIAYMSDGEAYVLYKQMSMIMRFKLLFKVVPRCHFFLRSAAVYQPF</sequence>
<proteinExistence type="uncertain"/>
<comment type="miscellaneous">
    <text evidence="1">Partially overlaps SGE1.</text>
</comment>
<comment type="caution">
    <text evidence="2">Product of a dubious gene prediction unlikely to encode a functional protein. Because of that it is not part of the S.cerevisiae S288c complete/reference proteome set.</text>
</comment>
<accession>A0A023PXI5</accession>
<feature type="chain" id="PRO_0000431064" description="Putative uncharacterized protein YPR197C">
    <location>
        <begin position="1"/>
        <end position="187"/>
    </location>
</feature>
<evidence type="ECO:0000305" key="1"/>
<evidence type="ECO:0000305" key="2">
    <source>
    </source>
</evidence>
<evidence type="ECO:0000312" key="3">
    <source>
        <dbReference type="SGD" id="S000006401"/>
    </source>
</evidence>
<protein>
    <recommendedName>
        <fullName evidence="1">Putative uncharacterized protein YPR197C</fullName>
    </recommendedName>
</protein>